<evidence type="ECO:0000255" key="1">
    <source>
        <dbReference type="HAMAP-Rule" id="MF_01071"/>
    </source>
</evidence>
<accession>Q32F39</accession>
<gene>
    <name evidence="1" type="primary">yobD</name>
    <name type="ordered locus">SDY_1966</name>
</gene>
<comment type="subcellular location">
    <subcellularLocation>
        <location evidence="1">Cell inner membrane</location>
        <topology evidence="1">Multi-pass membrane protein</topology>
    </subcellularLocation>
</comment>
<comment type="similarity">
    <text evidence="1">Belongs to the UPF0266 family.</text>
</comment>
<reference key="1">
    <citation type="journal article" date="2005" name="Nucleic Acids Res.">
        <title>Genome dynamics and diversity of Shigella species, the etiologic agents of bacillary dysentery.</title>
        <authorList>
            <person name="Yang F."/>
            <person name="Yang J."/>
            <person name="Zhang X."/>
            <person name="Chen L."/>
            <person name="Jiang Y."/>
            <person name="Yan Y."/>
            <person name="Tang X."/>
            <person name="Wang J."/>
            <person name="Xiong Z."/>
            <person name="Dong J."/>
            <person name="Xue Y."/>
            <person name="Zhu Y."/>
            <person name="Xu X."/>
            <person name="Sun L."/>
            <person name="Chen S."/>
            <person name="Nie H."/>
            <person name="Peng J."/>
            <person name="Xu J."/>
            <person name="Wang Y."/>
            <person name="Yuan Z."/>
            <person name="Wen Y."/>
            <person name="Yao Z."/>
            <person name="Shen Y."/>
            <person name="Qiang B."/>
            <person name="Hou Y."/>
            <person name="Yu J."/>
            <person name="Jin Q."/>
        </authorList>
    </citation>
    <scope>NUCLEOTIDE SEQUENCE [LARGE SCALE GENOMIC DNA]</scope>
    <source>
        <strain>Sd197</strain>
    </source>
</reference>
<sequence length="152" mass="17615">MTITDLVLILFIAALLAFAIYDQFIMPRRNGPTLLAIPLLRRGRIDSVIFVGLIVILIYNNVTNHGALITTWLLSALALMGFYIFWIRVPKIIFKQKGFFFANVWIEYSRIKAMNLSEDGVLVMQLEQRRLLIRVRNIDDLEKIYKLLVSTQ</sequence>
<proteinExistence type="inferred from homology"/>
<protein>
    <recommendedName>
        <fullName evidence="1">UPF0266 membrane protein YobD</fullName>
    </recommendedName>
</protein>
<keyword id="KW-0997">Cell inner membrane</keyword>
<keyword id="KW-1003">Cell membrane</keyword>
<keyword id="KW-0472">Membrane</keyword>
<keyword id="KW-1185">Reference proteome</keyword>
<keyword id="KW-0812">Transmembrane</keyword>
<keyword id="KW-1133">Transmembrane helix</keyword>
<organism>
    <name type="scientific">Shigella dysenteriae serotype 1 (strain Sd197)</name>
    <dbReference type="NCBI Taxonomy" id="300267"/>
    <lineage>
        <taxon>Bacteria</taxon>
        <taxon>Pseudomonadati</taxon>
        <taxon>Pseudomonadota</taxon>
        <taxon>Gammaproteobacteria</taxon>
        <taxon>Enterobacterales</taxon>
        <taxon>Enterobacteriaceae</taxon>
        <taxon>Shigella</taxon>
    </lineage>
</organism>
<feature type="chain" id="PRO_1000064592" description="UPF0266 membrane protein YobD">
    <location>
        <begin position="1"/>
        <end position="152"/>
    </location>
</feature>
<feature type="transmembrane region" description="Helical" evidence="1">
    <location>
        <begin position="6"/>
        <end position="26"/>
    </location>
</feature>
<feature type="transmembrane region" description="Helical" evidence="1">
    <location>
        <begin position="45"/>
        <end position="65"/>
    </location>
</feature>
<feature type="transmembrane region" description="Helical" evidence="1">
    <location>
        <begin position="67"/>
        <end position="87"/>
    </location>
</feature>
<dbReference type="EMBL" id="CP000034">
    <property type="protein sequence ID" value="ABB62066.1"/>
    <property type="molecule type" value="Genomic_DNA"/>
</dbReference>
<dbReference type="RefSeq" id="WP_000156255.1">
    <property type="nucleotide sequence ID" value="NC_007606.1"/>
</dbReference>
<dbReference type="RefSeq" id="YP_403557.1">
    <property type="nucleotide sequence ID" value="NC_007606.1"/>
</dbReference>
<dbReference type="EnsemblBacteria" id="ABB62066">
    <property type="protein sequence ID" value="ABB62066"/>
    <property type="gene ID" value="SDY_1966"/>
</dbReference>
<dbReference type="KEGG" id="sdy:SDY_1966"/>
<dbReference type="PATRIC" id="fig|300267.13.peg.2374"/>
<dbReference type="HOGENOM" id="CLU_133645_0_0_6"/>
<dbReference type="Proteomes" id="UP000002716">
    <property type="component" value="Chromosome"/>
</dbReference>
<dbReference type="GO" id="GO:0005886">
    <property type="term" value="C:plasma membrane"/>
    <property type="evidence" value="ECO:0007669"/>
    <property type="project" value="UniProtKB-SubCell"/>
</dbReference>
<dbReference type="HAMAP" id="MF_01071">
    <property type="entry name" value="UPF0266"/>
    <property type="match status" value="1"/>
</dbReference>
<dbReference type="InterPro" id="IPR009328">
    <property type="entry name" value="DUF986"/>
</dbReference>
<dbReference type="NCBIfam" id="NF002791">
    <property type="entry name" value="PRK02913.1"/>
    <property type="match status" value="1"/>
</dbReference>
<dbReference type="Pfam" id="PF06173">
    <property type="entry name" value="DUF986"/>
    <property type="match status" value="1"/>
</dbReference>
<dbReference type="PIRSF" id="PIRSF020687">
    <property type="entry name" value="UCP020687"/>
    <property type="match status" value="1"/>
</dbReference>
<name>YOBD_SHIDS</name>